<keyword id="KW-0963">Cytoplasm</keyword>
<keyword id="KW-0378">Hydrolase</keyword>
<keyword id="KW-0694">RNA-binding</keyword>
<keyword id="KW-0820">tRNA-binding</keyword>
<dbReference type="EC" id="3.1.1.29" evidence="1"/>
<dbReference type="EMBL" id="CP001108">
    <property type="protein sequence ID" value="ACF46400.1"/>
    <property type="molecule type" value="Genomic_DNA"/>
</dbReference>
<dbReference type="RefSeq" id="WP_012505934.1">
    <property type="nucleotide sequence ID" value="NC_011059.1"/>
</dbReference>
<dbReference type="SMR" id="B4S8L3"/>
<dbReference type="STRING" id="290512.Paes_1379"/>
<dbReference type="KEGG" id="paa:Paes_1379"/>
<dbReference type="eggNOG" id="COG0193">
    <property type="taxonomic scope" value="Bacteria"/>
</dbReference>
<dbReference type="HOGENOM" id="CLU_062456_4_1_10"/>
<dbReference type="Proteomes" id="UP000002725">
    <property type="component" value="Chromosome"/>
</dbReference>
<dbReference type="GO" id="GO:0005737">
    <property type="term" value="C:cytoplasm"/>
    <property type="evidence" value="ECO:0007669"/>
    <property type="project" value="UniProtKB-SubCell"/>
</dbReference>
<dbReference type="GO" id="GO:0004045">
    <property type="term" value="F:peptidyl-tRNA hydrolase activity"/>
    <property type="evidence" value="ECO:0007669"/>
    <property type="project" value="UniProtKB-UniRule"/>
</dbReference>
<dbReference type="GO" id="GO:0000049">
    <property type="term" value="F:tRNA binding"/>
    <property type="evidence" value="ECO:0007669"/>
    <property type="project" value="UniProtKB-UniRule"/>
</dbReference>
<dbReference type="GO" id="GO:0006515">
    <property type="term" value="P:protein quality control for misfolded or incompletely synthesized proteins"/>
    <property type="evidence" value="ECO:0007669"/>
    <property type="project" value="UniProtKB-UniRule"/>
</dbReference>
<dbReference type="GO" id="GO:0072344">
    <property type="term" value="P:rescue of stalled ribosome"/>
    <property type="evidence" value="ECO:0007669"/>
    <property type="project" value="UniProtKB-UniRule"/>
</dbReference>
<dbReference type="CDD" id="cd00462">
    <property type="entry name" value="PTH"/>
    <property type="match status" value="1"/>
</dbReference>
<dbReference type="FunFam" id="3.40.50.1470:FF:000001">
    <property type="entry name" value="Peptidyl-tRNA hydrolase"/>
    <property type="match status" value="1"/>
</dbReference>
<dbReference type="Gene3D" id="3.40.50.1470">
    <property type="entry name" value="Peptidyl-tRNA hydrolase"/>
    <property type="match status" value="1"/>
</dbReference>
<dbReference type="HAMAP" id="MF_00083">
    <property type="entry name" value="Pept_tRNA_hydro_bact"/>
    <property type="match status" value="1"/>
</dbReference>
<dbReference type="InterPro" id="IPR001328">
    <property type="entry name" value="Pept_tRNA_hydro"/>
</dbReference>
<dbReference type="InterPro" id="IPR018171">
    <property type="entry name" value="Pept_tRNA_hydro_CS"/>
</dbReference>
<dbReference type="InterPro" id="IPR036416">
    <property type="entry name" value="Pept_tRNA_hydro_sf"/>
</dbReference>
<dbReference type="NCBIfam" id="TIGR00447">
    <property type="entry name" value="pth"/>
    <property type="match status" value="1"/>
</dbReference>
<dbReference type="PANTHER" id="PTHR17224">
    <property type="entry name" value="PEPTIDYL-TRNA HYDROLASE"/>
    <property type="match status" value="1"/>
</dbReference>
<dbReference type="PANTHER" id="PTHR17224:SF1">
    <property type="entry name" value="PEPTIDYL-TRNA HYDROLASE"/>
    <property type="match status" value="1"/>
</dbReference>
<dbReference type="Pfam" id="PF01195">
    <property type="entry name" value="Pept_tRNA_hydro"/>
    <property type="match status" value="1"/>
</dbReference>
<dbReference type="SUPFAM" id="SSF53178">
    <property type="entry name" value="Peptidyl-tRNA hydrolase-like"/>
    <property type="match status" value="1"/>
</dbReference>
<dbReference type="PROSITE" id="PS01195">
    <property type="entry name" value="PEPT_TRNA_HYDROL_1"/>
    <property type="match status" value="1"/>
</dbReference>
<name>PTH_PROA2</name>
<gene>
    <name evidence="1" type="primary">pth</name>
    <name type="ordered locus">Paes_1379</name>
</gene>
<reference key="1">
    <citation type="submission" date="2008-06" db="EMBL/GenBank/DDBJ databases">
        <title>Complete sequence of chromosome of Prosthecochloris aestuarii DSM 271.</title>
        <authorList>
            <consortium name="US DOE Joint Genome Institute"/>
            <person name="Lucas S."/>
            <person name="Copeland A."/>
            <person name="Lapidus A."/>
            <person name="Glavina del Rio T."/>
            <person name="Dalin E."/>
            <person name="Tice H."/>
            <person name="Bruce D."/>
            <person name="Goodwin L."/>
            <person name="Pitluck S."/>
            <person name="Schmutz J."/>
            <person name="Larimer F."/>
            <person name="Land M."/>
            <person name="Hauser L."/>
            <person name="Kyrpides N."/>
            <person name="Anderson I."/>
            <person name="Liu Z."/>
            <person name="Li T."/>
            <person name="Zhao F."/>
            <person name="Overmann J."/>
            <person name="Bryant D.A."/>
            <person name="Richardson P."/>
        </authorList>
    </citation>
    <scope>NUCLEOTIDE SEQUENCE [LARGE SCALE GENOMIC DNA]</scope>
    <source>
        <strain>DSM 271 / SK 413</strain>
    </source>
</reference>
<comment type="function">
    <text evidence="1">Hydrolyzes ribosome-free peptidyl-tRNAs (with 1 or more amino acids incorporated), which drop off the ribosome during protein synthesis, or as a result of ribosome stalling.</text>
</comment>
<comment type="function">
    <text evidence="1">Catalyzes the release of premature peptidyl moieties from peptidyl-tRNA molecules trapped in stalled 50S ribosomal subunits, and thus maintains levels of free tRNAs and 50S ribosomes.</text>
</comment>
<comment type="catalytic activity">
    <reaction evidence="1">
        <text>an N-acyl-L-alpha-aminoacyl-tRNA + H2O = an N-acyl-L-amino acid + a tRNA + H(+)</text>
        <dbReference type="Rhea" id="RHEA:54448"/>
        <dbReference type="Rhea" id="RHEA-COMP:10123"/>
        <dbReference type="Rhea" id="RHEA-COMP:13883"/>
        <dbReference type="ChEBI" id="CHEBI:15377"/>
        <dbReference type="ChEBI" id="CHEBI:15378"/>
        <dbReference type="ChEBI" id="CHEBI:59874"/>
        <dbReference type="ChEBI" id="CHEBI:78442"/>
        <dbReference type="ChEBI" id="CHEBI:138191"/>
        <dbReference type="EC" id="3.1.1.29"/>
    </reaction>
</comment>
<comment type="subunit">
    <text evidence="1">Monomer.</text>
</comment>
<comment type="subcellular location">
    <subcellularLocation>
        <location evidence="1">Cytoplasm</location>
    </subcellularLocation>
</comment>
<comment type="similarity">
    <text evidence="1">Belongs to the PTH family.</text>
</comment>
<sequence length="192" mass="21368">MKLVAGLGNPEARYENTRHNIGFEVVDELARLHQSSFSSGKGNFLYSKIIHRNEPILLLKPMTYMNLSGNAVIAAMTFYKIEYQDILVVCDDLNIALGTIRMRAKGSAGGQNGLKHIIQCLKRDDFARLRVGIAPDHPVSSYSSFVLGKFNAEERKITDRMVSLSAEAALDFVAHGVEHAMNHYNTGKKTQQ</sequence>
<organism>
    <name type="scientific">Prosthecochloris aestuarii (strain DSM 271 / SK 413)</name>
    <dbReference type="NCBI Taxonomy" id="290512"/>
    <lineage>
        <taxon>Bacteria</taxon>
        <taxon>Pseudomonadati</taxon>
        <taxon>Chlorobiota</taxon>
        <taxon>Chlorobiia</taxon>
        <taxon>Chlorobiales</taxon>
        <taxon>Chlorobiaceae</taxon>
        <taxon>Prosthecochloris</taxon>
    </lineage>
</organism>
<proteinExistence type="inferred from homology"/>
<accession>B4S8L3</accession>
<feature type="chain" id="PRO_1000092970" description="Peptidyl-tRNA hydrolase">
    <location>
        <begin position="1"/>
        <end position="192"/>
    </location>
</feature>
<feature type="active site" description="Proton acceptor" evidence="1">
    <location>
        <position position="19"/>
    </location>
</feature>
<feature type="binding site" evidence="1">
    <location>
        <position position="14"/>
    </location>
    <ligand>
        <name>tRNA</name>
        <dbReference type="ChEBI" id="CHEBI:17843"/>
    </ligand>
</feature>
<feature type="binding site" evidence="1">
    <location>
        <position position="64"/>
    </location>
    <ligand>
        <name>tRNA</name>
        <dbReference type="ChEBI" id="CHEBI:17843"/>
    </ligand>
</feature>
<feature type="binding site" evidence="1">
    <location>
        <position position="66"/>
    </location>
    <ligand>
        <name>tRNA</name>
        <dbReference type="ChEBI" id="CHEBI:17843"/>
    </ligand>
</feature>
<feature type="binding site" evidence="1">
    <location>
        <position position="112"/>
    </location>
    <ligand>
        <name>tRNA</name>
        <dbReference type="ChEBI" id="CHEBI:17843"/>
    </ligand>
</feature>
<feature type="site" description="Discriminates between blocked and unblocked aminoacyl-tRNA" evidence="1">
    <location>
        <position position="9"/>
    </location>
</feature>
<feature type="site" description="Stabilizes the basic form of H active site to accept a proton" evidence="1">
    <location>
        <position position="91"/>
    </location>
</feature>
<evidence type="ECO:0000255" key="1">
    <source>
        <dbReference type="HAMAP-Rule" id="MF_00083"/>
    </source>
</evidence>
<protein>
    <recommendedName>
        <fullName evidence="1">Peptidyl-tRNA hydrolase</fullName>
        <shortName evidence="1">Pth</shortName>
        <ecNumber evidence="1">3.1.1.29</ecNumber>
    </recommendedName>
</protein>